<sequence>MQTIKCVVVGDGAVGKTCLLISYTTNKFPSEYVPTVFDNYAVTVMIGGEPYTLGLFDTAGQEDYDRLRPLSYPQTDVFLVCFSVVSPSSFENVKEKWVPEITHHCQKTPFLLVGTQIDLRDENSTLEKLAKNKQKPITMEQGEKLAKELKAVKYVECSALTQKGLKNVFDEAILAALEPPEPTKKRKCKFL</sequence>
<protein>
    <recommendedName>
        <fullName>Cdc42 homolog</fullName>
        <ecNumber evidence="2 3">3.6.5.2</ecNumber>
    </recommendedName>
</protein>
<accession>P40793</accession>
<accession>Q540W4</accession>
<accession>Q9U9S3</accession>
<accession>Q9U9S4</accession>
<accession>Q9U9S5</accession>
<accession>Q9U9S6</accession>
<accession>Q9V465</accession>
<proteinExistence type="evidence at protein level"/>
<organism>
    <name type="scientific">Drosophila melanogaster</name>
    <name type="common">Fruit fly</name>
    <dbReference type="NCBI Taxonomy" id="7227"/>
    <lineage>
        <taxon>Eukaryota</taxon>
        <taxon>Metazoa</taxon>
        <taxon>Ecdysozoa</taxon>
        <taxon>Arthropoda</taxon>
        <taxon>Hexapoda</taxon>
        <taxon>Insecta</taxon>
        <taxon>Pterygota</taxon>
        <taxon>Neoptera</taxon>
        <taxon>Endopterygota</taxon>
        <taxon>Diptera</taxon>
        <taxon>Brachycera</taxon>
        <taxon>Muscomorpha</taxon>
        <taxon>Ephydroidea</taxon>
        <taxon>Drosophilidae</taxon>
        <taxon>Drosophila</taxon>
        <taxon>Sophophora</taxon>
    </lineage>
</organism>
<keyword id="KW-0965">Cell junction</keyword>
<keyword id="KW-1003">Cell membrane</keyword>
<keyword id="KW-0217">Developmental protein</keyword>
<keyword id="KW-0342">GTP-binding</keyword>
<keyword id="KW-0378">Hydrolase</keyword>
<keyword id="KW-0449">Lipoprotein</keyword>
<keyword id="KW-0472">Membrane</keyword>
<keyword id="KW-0488">Methylation</keyword>
<keyword id="KW-0547">Nucleotide-binding</keyword>
<keyword id="KW-0636">Prenylation</keyword>
<keyword id="KW-1185">Reference proteome</keyword>
<dbReference type="EC" id="3.6.5.2" evidence="2 3"/>
<dbReference type="EMBL" id="U11824">
    <property type="protein sequence ID" value="AAA62871.1"/>
    <property type="molecule type" value="mRNA"/>
</dbReference>
<dbReference type="EMBL" id="AF153423">
    <property type="protein sequence ID" value="AAD43787.1"/>
    <property type="molecule type" value="Genomic_DNA"/>
</dbReference>
<dbReference type="EMBL" id="AF153424">
    <property type="protein sequence ID" value="AAD43788.1"/>
    <property type="molecule type" value="Genomic_DNA"/>
</dbReference>
<dbReference type="EMBL" id="AF153425">
    <property type="protein sequence ID" value="AAD43789.1"/>
    <property type="molecule type" value="Genomic_DNA"/>
</dbReference>
<dbReference type="EMBL" id="AF153426">
    <property type="protein sequence ID" value="AAD43790.1"/>
    <property type="molecule type" value="Genomic_DNA"/>
</dbReference>
<dbReference type="EMBL" id="AF153427">
    <property type="protein sequence ID" value="AAD43791.1"/>
    <property type="molecule type" value="Genomic_DNA"/>
</dbReference>
<dbReference type="EMBL" id="AF153428">
    <property type="protein sequence ID" value="AAD43792.1"/>
    <property type="molecule type" value="Genomic_DNA"/>
</dbReference>
<dbReference type="EMBL" id="AF153429">
    <property type="protein sequence ID" value="AAD43793.1"/>
    <property type="molecule type" value="Genomic_DNA"/>
</dbReference>
<dbReference type="EMBL" id="AE014298">
    <property type="protein sequence ID" value="AAF49007.1"/>
    <property type="molecule type" value="Genomic_DNA"/>
</dbReference>
<dbReference type="EMBL" id="AY119570">
    <property type="protein sequence ID" value="AAM50224.1"/>
    <property type="molecule type" value="mRNA"/>
</dbReference>
<dbReference type="PIR" id="I45716">
    <property type="entry name" value="I45716"/>
</dbReference>
<dbReference type="RefSeq" id="NP_001245762.1">
    <property type="nucleotide sequence ID" value="NM_001258833.3"/>
</dbReference>
<dbReference type="RefSeq" id="NP_001245763.1">
    <property type="nucleotide sequence ID" value="NM_001258834.3"/>
</dbReference>
<dbReference type="RefSeq" id="NP_523414.1">
    <property type="nucleotide sequence ID" value="NM_078690.4"/>
</dbReference>
<dbReference type="SMR" id="P40793"/>
<dbReference type="BioGRID" id="59277">
    <property type="interactions" value="63"/>
</dbReference>
<dbReference type="DIP" id="DIP-31003N"/>
<dbReference type="FunCoup" id="P40793">
    <property type="interactions" value="2067"/>
</dbReference>
<dbReference type="IntAct" id="P40793">
    <property type="interactions" value="9"/>
</dbReference>
<dbReference type="MINT" id="P40793"/>
<dbReference type="STRING" id="7227.FBpp0301153"/>
<dbReference type="PaxDb" id="7227-FBpp0301153"/>
<dbReference type="EnsemblMetazoa" id="FBtr0074751">
    <property type="protein sequence ID" value="FBpp0074520"/>
    <property type="gene ID" value="FBgn0010341"/>
</dbReference>
<dbReference type="EnsemblMetazoa" id="FBtr0309214">
    <property type="protein sequence ID" value="FBpp0301153"/>
    <property type="gene ID" value="FBgn0010341"/>
</dbReference>
<dbReference type="EnsemblMetazoa" id="FBtr0309215">
    <property type="protein sequence ID" value="FBpp0301154"/>
    <property type="gene ID" value="FBgn0010341"/>
</dbReference>
<dbReference type="GeneID" id="32981"/>
<dbReference type="KEGG" id="dme:Dmel_CG12530"/>
<dbReference type="AGR" id="FB:FBgn0010341"/>
<dbReference type="CTD" id="998"/>
<dbReference type="FlyBase" id="FBgn0010341">
    <property type="gene designation" value="Cdc42"/>
</dbReference>
<dbReference type="VEuPathDB" id="VectorBase:FBgn0010341"/>
<dbReference type="eggNOG" id="KOG0393">
    <property type="taxonomic scope" value="Eukaryota"/>
</dbReference>
<dbReference type="GeneTree" id="ENSGT00940000153675"/>
<dbReference type="HOGENOM" id="CLU_041217_21_3_1"/>
<dbReference type="InParanoid" id="P40793"/>
<dbReference type="OMA" id="GDEPYTF"/>
<dbReference type="OrthoDB" id="8830751at2759"/>
<dbReference type="PhylomeDB" id="P40793"/>
<dbReference type="Reactome" id="R-DME-114604">
    <property type="pathway name" value="GPVI-mediated activation cascade"/>
</dbReference>
<dbReference type="Reactome" id="R-DME-182971">
    <property type="pathway name" value="EGFR downregulation"/>
</dbReference>
<dbReference type="Reactome" id="R-DME-2029482">
    <property type="pathway name" value="Regulation of actin dynamics for phagocytic cup formation"/>
</dbReference>
<dbReference type="Reactome" id="R-DME-389359">
    <property type="pathway name" value="CD28 dependent Vav1 pathway"/>
</dbReference>
<dbReference type="Reactome" id="R-DME-3928662">
    <property type="pathway name" value="EPHB-mediated forward signaling"/>
</dbReference>
<dbReference type="Reactome" id="R-DME-418885">
    <property type="pathway name" value="DCC mediated attractive signaling"/>
</dbReference>
<dbReference type="Reactome" id="R-DME-4420097">
    <property type="pathway name" value="VEGFA-VEGFR2 Pathway"/>
</dbReference>
<dbReference type="Reactome" id="R-DME-525793">
    <property type="pathway name" value="Myogenesis"/>
</dbReference>
<dbReference type="Reactome" id="R-DME-5627123">
    <property type="pathway name" value="RHO GTPases activate PAKs"/>
</dbReference>
<dbReference type="Reactome" id="R-DME-5663213">
    <property type="pathway name" value="RHO GTPases Activate WASPs and WAVEs"/>
</dbReference>
<dbReference type="Reactome" id="R-DME-5663220">
    <property type="pathway name" value="RHO GTPases Activate Formins"/>
</dbReference>
<dbReference type="Reactome" id="R-DME-5687128">
    <property type="pathway name" value="MAPK6/MAPK4 signaling"/>
</dbReference>
<dbReference type="Reactome" id="R-DME-8964616">
    <property type="pathway name" value="G beta:gamma signalling through CDC42"/>
</dbReference>
<dbReference type="Reactome" id="R-DME-9013148">
    <property type="pathway name" value="CDC42 GTPase cycle"/>
</dbReference>
<dbReference type="Reactome" id="R-DME-9013149">
    <property type="pathway name" value="RAC1 GTPase cycle"/>
</dbReference>
<dbReference type="Reactome" id="R-DME-9013404">
    <property type="pathway name" value="RAC2 GTPase cycle"/>
</dbReference>
<dbReference type="Reactome" id="R-DME-9013406">
    <property type="pathway name" value="RHOQ GTPase cycle"/>
</dbReference>
<dbReference type="Reactome" id="R-DME-9013408">
    <property type="pathway name" value="RHOG GTPase cycle"/>
</dbReference>
<dbReference type="Reactome" id="R-DME-9013409">
    <property type="pathway name" value="RHOJ GTPase cycle"/>
</dbReference>
<dbReference type="Reactome" id="R-DME-9013420">
    <property type="pathway name" value="RHOU GTPase cycle"/>
</dbReference>
<dbReference type="Reactome" id="R-DME-9013423">
    <property type="pathway name" value="RAC3 GTPase cycle"/>
</dbReference>
<dbReference type="Reactome" id="R-DME-9013424">
    <property type="pathway name" value="RHOV GTPase cycle"/>
</dbReference>
<dbReference type="Reactome" id="R-DME-983231">
    <property type="pathway name" value="Factors involved in megakaryocyte development and platelet production"/>
</dbReference>
<dbReference type="SignaLink" id="P40793"/>
<dbReference type="BioGRID-ORCS" id="32981">
    <property type="hits" value="0 hits in 1 CRISPR screen"/>
</dbReference>
<dbReference type="ChiTaRS" id="Cdc42">
    <property type="organism name" value="fly"/>
</dbReference>
<dbReference type="GenomeRNAi" id="32981"/>
<dbReference type="PRO" id="PR:P40793"/>
<dbReference type="Proteomes" id="UP000000803">
    <property type="component" value="Chromosome X"/>
</dbReference>
<dbReference type="Bgee" id="FBgn0010341">
    <property type="expression patterns" value="Expressed in copper cell (Drosophila) in digestive tract and 224 other cell types or tissues"/>
</dbReference>
<dbReference type="ExpressionAtlas" id="P40793">
    <property type="expression patterns" value="baseline and differential"/>
</dbReference>
<dbReference type="GO" id="GO:0005912">
    <property type="term" value="C:adherens junction"/>
    <property type="evidence" value="ECO:0007669"/>
    <property type="project" value="UniProtKB-SubCell"/>
</dbReference>
<dbReference type="GO" id="GO:0045177">
    <property type="term" value="C:apical part of cell"/>
    <property type="evidence" value="ECO:0000314"/>
    <property type="project" value="FlyBase"/>
</dbReference>
<dbReference type="GO" id="GO:0030424">
    <property type="term" value="C:axon"/>
    <property type="evidence" value="ECO:0000314"/>
    <property type="project" value="FlyBase"/>
</dbReference>
<dbReference type="GO" id="GO:0005938">
    <property type="term" value="C:cell cortex"/>
    <property type="evidence" value="ECO:0000314"/>
    <property type="project" value="FlyBase"/>
</dbReference>
<dbReference type="GO" id="GO:0005737">
    <property type="term" value="C:cytoplasm"/>
    <property type="evidence" value="ECO:0000314"/>
    <property type="project" value="FlyBase"/>
</dbReference>
<dbReference type="GO" id="GO:0030426">
    <property type="term" value="C:growth cone"/>
    <property type="evidence" value="ECO:0000314"/>
    <property type="project" value="FlyBase"/>
</dbReference>
<dbReference type="GO" id="GO:0030027">
    <property type="term" value="C:lamellipodium"/>
    <property type="evidence" value="ECO:0000314"/>
    <property type="project" value="UniProtKB"/>
</dbReference>
<dbReference type="GO" id="GO:0005634">
    <property type="term" value="C:nucleus"/>
    <property type="evidence" value="ECO:0000314"/>
    <property type="project" value="FlyBase"/>
</dbReference>
<dbReference type="GO" id="GO:0005886">
    <property type="term" value="C:plasma membrane"/>
    <property type="evidence" value="ECO:0007005"/>
    <property type="project" value="FlyBase"/>
</dbReference>
<dbReference type="GO" id="GO:0016028">
    <property type="term" value="C:rhabdomere"/>
    <property type="evidence" value="ECO:0000315"/>
    <property type="project" value="FlyBase"/>
</dbReference>
<dbReference type="GO" id="GO:0045202">
    <property type="term" value="C:synapse"/>
    <property type="evidence" value="ECO:0007669"/>
    <property type="project" value="GOC"/>
</dbReference>
<dbReference type="GO" id="GO:0003925">
    <property type="term" value="F:G protein activity"/>
    <property type="evidence" value="ECO:0007669"/>
    <property type="project" value="UniProtKB-EC"/>
</dbReference>
<dbReference type="GO" id="GO:0005525">
    <property type="term" value="F:GTP binding"/>
    <property type="evidence" value="ECO:0000318"/>
    <property type="project" value="GO_Central"/>
</dbReference>
<dbReference type="GO" id="GO:0032794">
    <property type="term" value="F:GTPase activating protein binding"/>
    <property type="evidence" value="ECO:0000353"/>
    <property type="project" value="FlyBase"/>
</dbReference>
<dbReference type="GO" id="GO:0003924">
    <property type="term" value="F:GTPase activity"/>
    <property type="evidence" value="ECO:0000314"/>
    <property type="project" value="FlyBase"/>
</dbReference>
<dbReference type="GO" id="GO:0019901">
    <property type="term" value="F:protein kinase binding"/>
    <property type="evidence" value="ECO:0000353"/>
    <property type="project" value="FlyBase"/>
</dbReference>
<dbReference type="GO" id="GO:0030036">
    <property type="term" value="P:actin cytoskeleton organization"/>
    <property type="evidence" value="ECO:0000315"/>
    <property type="project" value="FlyBase"/>
</dbReference>
<dbReference type="GO" id="GO:0007015">
    <property type="term" value="P:actin filament organization"/>
    <property type="evidence" value="ECO:0000315"/>
    <property type="project" value="FlyBase"/>
</dbReference>
<dbReference type="GO" id="GO:0030041">
    <property type="term" value="P:actin filament polymerization"/>
    <property type="evidence" value="ECO:0000315"/>
    <property type="project" value="FlyBase"/>
</dbReference>
<dbReference type="GO" id="GO:0048675">
    <property type="term" value="P:axon extension"/>
    <property type="evidence" value="ECO:0000316"/>
    <property type="project" value="FlyBase"/>
</dbReference>
<dbReference type="GO" id="GO:0007411">
    <property type="term" value="P:axon guidance"/>
    <property type="evidence" value="ECO:0000315"/>
    <property type="project" value="FlyBase"/>
</dbReference>
<dbReference type="GO" id="GO:0007409">
    <property type="term" value="P:axonogenesis"/>
    <property type="evidence" value="ECO:0000304"/>
    <property type="project" value="FlyBase"/>
</dbReference>
<dbReference type="GO" id="GO:0007298">
    <property type="term" value="P:border follicle cell migration"/>
    <property type="evidence" value="ECO:0000315"/>
    <property type="project" value="FlyBase"/>
</dbReference>
<dbReference type="GO" id="GO:0035147">
    <property type="term" value="P:branch fusion, open tracheal system"/>
    <property type="evidence" value="ECO:0000315"/>
    <property type="project" value="FlyBase"/>
</dbReference>
<dbReference type="GO" id="GO:0060446">
    <property type="term" value="P:branching involved in open tracheal system development"/>
    <property type="evidence" value="ECO:0000315"/>
    <property type="project" value="FlyBase"/>
</dbReference>
<dbReference type="GO" id="GO:0030031">
    <property type="term" value="P:cell projection assembly"/>
    <property type="evidence" value="ECO:0000315"/>
    <property type="project" value="FlyBase"/>
</dbReference>
<dbReference type="GO" id="GO:0030030">
    <property type="term" value="P:cell projection organization"/>
    <property type="evidence" value="ECO:0000315"/>
    <property type="project" value="FlyBase"/>
</dbReference>
<dbReference type="GO" id="GO:0007349">
    <property type="term" value="P:cellularization"/>
    <property type="evidence" value="ECO:0000304"/>
    <property type="project" value="FlyBase"/>
</dbReference>
<dbReference type="GO" id="GO:0030866">
    <property type="term" value="P:cortical actin cytoskeleton organization"/>
    <property type="evidence" value="ECO:0000315"/>
    <property type="project" value="FlyBase"/>
</dbReference>
<dbReference type="GO" id="GO:0048813">
    <property type="term" value="P:dendrite morphogenesis"/>
    <property type="evidence" value="ECO:0000315"/>
    <property type="project" value="FlyBase"/>
</dbReference>
<dbReference type="GO" id="GO:0046843">
    <property type="term" value="P:dorsal appendage formation"/>
    <property type="evidence" value="ECO:0000315"/>
    <property type="project" value="FlyBase"/>
</dbReference>
<dbReference type="GO" id="GO:0007391">
    <property type="term" value="P:dorsal closure"/>
    <property type="evidence" value="ECO:0000315"/>
    <property type="project" value="UniProtKB"/>
</dbReference>
<dbReference type="GO" id="GO:0035010">
    <property type="term" value="P:encapsulation of foreign target"/>
    <property type="evidence" value="ECO:0000315"/>
    <property type="project" value="FlyBase"/>
</dbReference>
<dbReference type="GO" id="GO:0006897">
    <property type="term" value="P:endocytosis"/>
    <property type="evidence" value="ECO:0000318"/>
    <property type="project" value="GO_Central"/>
</dbReference>
<dbReference type="GO" id="GO:0030010">
    <property type="term" value="P:establishment of cell polarity"/>
    <property type="evidence" value="ECO:0000318"/>
    <property type="project" value="GO_Central"/>
</dbReference>
<dbReference type="GO" id="GO:0045200">
    <property type="term" value="P:establishment of neuroblast polarity"/>
    <property type="evidence" value="ECO:0000315"/>
    <property type="project" value="FlyBase"/>
</dbReference>
<dbReference type="GO" id="GO:0051601">
    <property type="term" value="P:exocyst localization"/>
    <property type="evidence" value="ECO:0000315"/>
    <property type="project" value="FlyBase"/>
</dbReference>
<dbReference type="GO" id="GO:0035099">
    <property type="term" value="P:hemocyte migration"/>
    <property type="evidence" value="ECO:0000315"/>
    <property type="project" value="FlyBase"/>
</dbReference>
<dbReference type="GO" id="GO:0035318">
    <property type="term" value="P:imaginal disc-derived wing hair outgrowth"/>
    <property type="evidence" value="ECO:0000315"/>
    <property type="project" value="FlyBase"/>
</dbReference>
<dbReference type="GO" id="GO:0030011">
    <property type="term" value="P:maintenance of cell polarity"/>
    <property type="evidence" value="ECO:0000315"/>
    <property type="project" value="FlyBase"/>
</dbReference>
<dbReference type="GO" id="GO:0045185">
    <property type="term" value="P:maintenance of protein location"/>
    <property type="evidence" value="ECO:0000315"/>
    <property type="project" value="UniProtKB"/>
</dbReference>
<dbReference type="GO" id="GO:0035011">
    <property type="term" value="P:melanotic encapsulation of foreign target"/>
    <property type="evidence" value="ECO:0000315"/>
    <property type="project" value="FlyBase"/>
</dbReference>
<dbReference type="GO" id="GO:0008045">
    <property type="term" value="P:motor neuron axon guidance"/>
    <property type="evidence" value="ECO:0000315"/>
    <property type="project" value="FlyBase"/>
</dbReference>
<dbReference type="GO" id="GO:0097206">
    <property type="term" value="P:nephrocyte filtration"/>
    <property type="evidence" value="ECO:0000315"/>
    <property type="project" value="FlyBase"/>
</dbReference>
<dbReference type="GO" id="GO:0007274">
    <property type="term" value="P:neuromuscular synaptic transmission"/>
    <property type="evidence" value="ECO:0000316"/>
    <property type="project" value="FlyBase"/>
</dbReference>
<dbReference type="GO" id="GO:0031175">
    <property type="term" value="P:neuron projection development"/>
    <property type="evidence" value="ECO:0000315"/>
    <property type="project" value="FlyBase"/>
</dbReference>
<dbReference type="GO" id="GO:0048812">
    <property type="term" value="P:neuron projection morphogenesis"/>
    <property type="evidence" value="ECO:0000315"/>
    <property type="project" value="FlyBase"/>
</dbReference>
<dbReference type="GO" id="GO:0016318">
    <property type="term" value="P:ommatidial rotation"/>
    <property type="evidence" value="ECO:0000316"/>
    <property type="project" value="UniProtKB"/>
</dbReference>
<dbReference type="GO" id="GO:0048477">
    <property type="term" value="P:oogenesis"/>
    <property type="evidence" value="ECO:0000304"/>
    <property type="project" value="FlyBase"/>
</dbReference>
<dbReference type="GO" id="GO:0006909">
    <property type="term" value="P:phagocytosis"/>
    <property type="evidence" value="ECO:0000315"/>
    <property type="project" value="FlyBase"/>
</dbReference>
<dbReference type="GO" id="GO:0051491">
    <property type="term" value="P:positive regulation of filopodium assembly"/>
    <property type="evidence" value="ECO:0000315"/>
    <property type="project" value="FlyBase"/>
</dbReference>
<dbReference type="GO" id="GO:0046330">
    <property type="term" value="P:positive regulation of JNK cascade"/>
    <property type="evidence" value="ECO:0000316"/>
    <property type="project" value="FlyBase"/>
</dbReference>
<dbReference type="GO" id="GO:0010592">
    <property type="term" value="P:positive regulation of lamellipodium assembly"/>
    <property type="evidence" value="ECO:0000315"/>
    <property type="project" value="FlyBase"/>
</dbReference>
<dbReference type="GO" id="GO:0045860">
    <property type="term" value="P:positive regulation of protein kinase activity"/>
    <property type="evidence" value="ECO:0000315"/>
    <property type="project" value="UniProtKB"/>
</dbReference>
<dbReference type="GO" id="GO:0090303">
    <property type="term" value="P:positive regulation of wound healing"/>
    <property type="evidence" value="ECO:0000315"/>
    <property type="project" value="FlyBase"/>
</dbReference>
<dbReference type="GO" id="GO:0072659">
    <property type="term" value="P:protein localization to plasma membrane"/>
    <property type="evidence" value="ECO:0000315"/>
    <property type="project" value="FlyBase"/>
</dbReference>
<dbReference type="GO" id="GO:0030833">
    <property type="term" value="P:regulation of actin filament polymerization"/>
    <property type="evidence" value="ECO:0000314"/>
    <property type="project" value="FlyBase"/>
</dbReference>
<dbReference type="GO" id="GO:0050770">
    <property type="term" value="P:regulation of axonogenesis"/>
    <property type="evidence" value="ECO:0000316"/>
    <property type="project" value="FlyBase"/>
</dbReference>
<dbReference type="GO" id="GO:0008360">
    <property type="term" value="P:regulation of cell shape"/>
    <property type="evidence" value="ECO:0000315"/>
    <property type="project" value="FlyBase"/>
</dbReference>
<dbReference type="GO" id="GO:0046928">
    <property type="term" value="P:regulation of neurotransmitter secretion"/>
    <property type="evidence" value="ECO:0000315"/>
    <property type="project" value="FlyBase"/>
</dbReference>
<dbReference type="GO" id="GO:0008582">
    <property type="term" value="P:regulation of synaptic assembly at neuromuscular junction"/>
    <property type="evidence" value="ECO:0000314"/>
    <property type="project" value="FlyBase"/>
</dbReference>
<dbReference type="GO" id="GO:0009611">
    <property type="term" value="P:response to wounding"/>
    <property type="evidence" value="ECO:0000315"/>
    <property type="project" value="FlyBase"/>
</dbReference>
<dbReference type="GO" id="GO:0007266">
    <property type="term" value="P:Rho protein signal transduction"/>
    <property type="evidence" value="ECO:0000316"/>
    <property type="project" value="FlyBase"/>
</dbReference>
<dbReference type="GO" id="GO:0050975">
    <property type="term" value="P:sensory perception of touch"/>
    <property type="evidence" value="ECO:0000315"/>
    <property type="project" value="FlyBase"/>
</dbReference>
<dbReference type="GO" id="GO:0007165">
    <property type="term" value="P:signal transduction"/>
    <property type="evidence" value="ECO:0000318"/>
    <property type="project" value="GO_Central"/>
</dbReference>
<dbReference type="GO" id="GO:0007286">
    <property type="term" value="P:spermatid development"/>
    <property type="evidence" value="ECO:0000315"/>
    <property type="project" value="FlyBase"/>
</dbReference>
<dbReference type="GO" id="GO:0048010">
    <property type="term" value="P:vascular endothelial growth factor receptor signaling pathway"/>
    <property type="evidence" value="ECO:0000316"/>
    <property type="project" value="FlyBase"/>
</dbReference>
<dbReference type="GO" id="GO:0016192">
    <property type="term" value="P:vesicle-mediated transport"/>
    <property type="evidence" value="ECO:0000315"/>
    <property type="project" value="FlyBase"/>
</dbReference>
<dbReference type="GO" id="GO:0042060">
    <property type="term" value="P:wound healing"/>
    <property type="evidence" value="ECO:0000315"/>
    <property type="project" value="FlyBase"/>
</dbReference>
<dbReference type="CDD" id="cd01874">
    <property type="entry name" value="Cdc42"/>
    <property type="match status" value="1"/>
</dbReference>
<dbReference type="FunFam" id="3.40.50.300:FF:000167">
    <property type="entry name" value="Cell division control protein 42 homolog"/>
    <property type="match status" value="1"/>
</dbReference>
<dbReference type="Gene3D" id="3.40.50.300">
    <property type="entry name" value="P-loop containing nucleotide triphosphate hydrolases"/>
    <property type="match status" value="1"/>
</dbReference>
<dbReference type="InterPro" id="IPR037874">
    <property type="entry name" value="Cdc42"/>
</dbReference>
<dbReference type="InterPro" id="IPR027417">
    <property type="entry name" value="P-loop_NTPase"/>
</dbReference>
<dbReference type="InterPro" id="IPR005225">
    <property type="entry name" value="Small_GTP-bd"/>
</dbReference>
<dbReference type="InterPro" id="IPR001806">
    <property type="entry name" value="Small_GTPase"/>
</dbReference>
<dbReference type="InterPro" id="IPR003578">
    <property type="entry name" value="Small_GTPase_Rho"/>
</dbReference>
<dbReference type="NCBIfam" id="TIGR00231">
    <property type="entry name" value="small_GTP"/>
    <property type="match status" value="1"/>
</dbReference>
<dbReference type="PANTHER" id="PTHR24072">
    <property type="entry name" value="RHO FAMILY GTPASE"/>
    <property type="match status" value="1"/>
</dbReference>
<dbReference type="Pfam" id="PF00071">
    <property type="entry name" value="Ras"/>
    <property type="match status" value="1"/>
</dbReference>
<dbReference type="PRINTS" id="PR00449">
    <property type="entry name" value="RASTRNSFRMNG"/>
</dbReference>
<dbReference type="SMART" id="SM00175">
    <property type="entry name" value="RAB"/>
    <property type="match status" value="1"/>
</dbReference>
<dbReference type="SMART" id="SM00173">
    <property type="entry name" value="RAS"/>
    <property type="match status" value="1"/>
</dbReference>
<dbReference type="SMART" id="SM00174">
    <property type="entry name" value="RHO"/>
    <property type="match status" value="1"/>
</dbReference>
<dbReference type="SUPFAM" id="SSF52540">
    <property type="entry name" value="P-loop containing nucleoside triphosphate hydrolases"/>
    <property type="match status" value="1"/>
</dbReference>
<dbReference type="PROSITE" id="PS51420">
    <property type="entry name" value="RHO"/>
    <property type="match status" value="1"/>
</dbReference>
<reference key="1">
    <citation type="journal article" date="1994" name="Genes Dev.">
        <title>Distinct morphogenetic functions of similar small GTPases: Drosophila Drac1 is involved in axonal outgrowth and myoblast fusion.</title>
        <authorList>
            <person name="Luo L."/>
            <person name="Liao Y.J."/>
            <person name="Jan L.Y."/>
            <person name="Jan Y."/>
        </authorList>
    </citation>
    <scope>NUCLEOTIDE SEQUENCE [MRNA]</scope>
    <source>
        <strain>Oregon-R</strain>
        <tissue>Embryo</tissue>
    </source>
</reference>
<reference key="2">
    <citation type="journal article" date="2000" name="Dev. Biol.">
        <title>Functional analysis of Cdc42 in actin filament assembly, epithelial morphogenesis, and cell signaling during Drosophila development.</title>
        <authorList>
            <person name="Genova J.L."/>
            <person name="Jong S."/>
            <person name="Camp J.T."/>
            <person name="Fehon R.G."/>
        </authorList>
    </citation>
    <scope>NUCLEOTIDE SEQUENCE [GENOMIC DNA]</scope>
</reference>
<reference key="3">
    <citation type="journal article" date="2000" name="Science">
        <title>The genome sequence of Drosophila melanogaster.</title>
        <authorList>
            <person name="Adams M.D."/>
            <person name="Celniker S.E."/>
            <person name="Holt R.A."/>
            <person name="Evans C.A."/>
            <person name="Gocayne J.D."/>
            <person name="Amanatides P.G."/>
            <person name="Scherer S.E."/>
            <person name="Li P.W."/>
            <person name="Hoskins R.A."/>
            <person name="Galle R.F."/>
            <person name="George R.A."/>
            <person name="Lewis S.E."/>
            <person name="Richards S."/>
            <person name="Ashburner M."/>
            <person name="Henderson S.N."/>
            <person name="Sutton G.G."/>
            <person name="Wortman J.R."/>
            <person name="Yandell M.D."/>
            <person name="Zhang Q."/>
            <person name="Chen L.X."/>
            <person name="Brandon R.C."/>
            <person name="Rogers Y.-H.C."/>
            <person name="Blazej R.G."/>
            <person name="Champe M."/>
            <person name="Pfeiffer B.D."/>
            <person name="Wan K.H."/>
            <person name="Doyle C."/>
            <person name="Baxter E.G."/>
            <person name="Helt G."/>
            <person name="Nelson C.R."/>
            <person name="Miklos G.L.G."/>
            <person name="Abril J.F."/>
            <person name="Agbayani A."/>
            <person name="An H.-J."/>
            <person name="Andrews-Pfannkoch C."/>
            <person name="Baldwin D."/>
            <person name="Ballew R.M."/>
            <person name="Basu A."/>
            <person name="Baxendale J."/>
            <person name="Bayraktaroglu L."/>
            <person name="Beasley E.M."/>
            <person name="Beeson K.Y."/>
            <person name="Benos P.V."/>
            <person name="Berman B.P."/>
            <person name="Bhandari D."/>
            <person name="Bolshakov S."/>
            <person name="Borkova D."/>
            <person name="Botchan M.R."/>
            <person name="Bouck J."/>
            <person name="Brokstein P."/>
            <person name="Brottier P."/>
            <person name="Burtis K.C."/>
            <person name="Busam D.A."/>
            <person name="Butler H."/>
            <person name="Cadieu E."/>
            <person name="Center A."/>
            <person name="Chandra I."/>
            <person name="Cherry J.M."/>
            <person name="Cawley S."/>
            <person name="Dahlke C."/>
            <person name="Davenport L.B."/>
            <person name="Davies P."/>
            <person name="de Pablos B."/>
            <person name="Delcher A."/>
            <person name="Deng Z."/>
            <person name="Mays A.D."/>
            <person name="Dew I."/>
            <person name="Dietz S.M."/>
            <person name="Dodson K."/>
            <person name="Doup L.E."/>
            <person name="Downes M."/>
            <person name="Dugan-Rocha S."/>
            <person name="Dunkov B.C."/>
            <person name="Dunn P."/>
            <person name="Durbin K.J."/>
            <person name="Evangelista C.C."/>
            <person name="Ferraz C."/>
            <person name="Ferriera S."/>
            <person name="Fleischmann W."/>
            <person name="Fosler C."/>
            <person name="Gabrielian A.E."/>
            <person name="Garg N.S."/>
            <person name="Gelbart W.M."/>
            <person name="Glasser K."/>
            <person name="Glodek A."/>
            <person name="Gong F."/>
            <person name="Gorrell J.H."/>
            <person name="Gu Z."/>
            <person name="Guan P."/>
            <person name="Harris M."/>
            <person name="Harris N.L."/>
            <person name="Harvey D.A."/>
            <person name="Heiman T.J."/>
            <person name="Hernandez J.R."/>
            <person name="Houck J."/>
            <person name="Hostin D."/>
            <person name="Houston K.A."/>
            <person name="Howland T.J."/>
            <person name="Wei M.-H."/>
            <person name="Ibegwam C."/>
            <person name="Jalali M."/>
            <person name="Kalush F."/>
            <person name="Karpen G.H."/>
            <person name="Ke Z."/>
            <person name="Kennison J.A."/>
            <person name="Ketchum K.A."/>
            <person name="Kimmel B.E."/>
            <person name="Kodira C.D."/>
            <person name="Kraft C.L."/>
            <person name="Kravitz S."/>
            <person name="Kulp D."/>
            <person name="Lai Z."/>
            <person name="Lasko P."/>
            <person name="Lei Y."/>
            <person name="Levitsky A.A."/>
            <person name="Li J.H."/>
            <person name="Li Z."/>
            <person name="Liang Y."/>
            <person name="Lin X."/>
            <person name="Liu X."/>
            <person name="Mattei B."/>
            <person name="McIntosh T.C."/>
            <person name="McLeod M.P."/>
            <person name="McPherson D."/>
            <person name="Merkulov G."/>
            <person name="Milshina N.V."/>
            <person name="Mobarry C."/>
            <person name="Morris J."/>
            <person name="Moshrefi A."/>
            <person name="Mount S.M."/>
            <person name="Moy M."/>
            <person name="Murphy B."/>
            <person name="Murphy L."/>
            <person name="Muzny D.M."/>
            <person name="Nelson D.L."/>
            <person name="Nelson D.R."/>
            <person name="Nelson K.A."/>
            <person name="Nixon K."/>
            <person name="Nusskern D.R."/>
            <person name="Pacleb J.M."/>
            <person name="Palazzolo M."/>
            <person name="Pittman G.S."/>
            <person name="Pan S."/>
            <person name="Pollard J."/>
            <person name="Puri V."/>
            <person name="Reese M.G."/>
            <person name="Reinert K."/>
            <person name="Remington K."/>
            <person name="Saunders R.D.C."/>
            <person name="Scheeler F."/>
            <person name="Shen H."/>
            <person name="Shue B.C."/>
            <person name="Siden-Kiamos I."/>
            <person name="Simpson M."/>
            <person name="Skupski M.P."/>
            <person name="Smith T.J."/>
            <person name="Spier E."/>
            <person name="Spradling A.C."/>
            <person name="Stapleton M."/>
            <person name="Strong R."/>
            <person name="Sun E."/>
            <person name="Svirskas R."/>
            <person name="Tector C."/>
            <person name="Turner R."/>
            <person name="Venter E."/>
            <person name="Wang A.H."/>
            <person name="Wang X."/>
            <person name="Wang Z.-Y."/>
            <person name="Wassarman D.A."/>
            <person name="Weinstock G.M."/>
            <person name="Weissenbach J."/>
            <person name="Williams S.M."/>
            <person name="Woodage T."/>
            <person name="Worley K.C."/>
            <person name="Wu D."/>
            <person name="Yang S."/>
            <person name="Yao Q.A."/>
            <person name="Ye J."/>
            <person name="Yeh R.-F."/>
            <person name="Zaveri J.S."/>
            <person name="Zhan M."/>
            <person name="Zhang G."/>
            <person name="Zhao Q."/>
            <person name="Zheng L."/>
            <person name="Zheng X.H."/>
            <person name="Zhong F.N."/>
            <person name="Zhong W."/>
            <person name="Zhou X."/>
            <person name="Zhu S.C."/>
            <person name="Zhu X."/>
            <person name="Smith H.O."/>
            <person name="Gibbs R.A."/>
            <person name="Myers E.W."/>
            <person name="Rubin G.M."/>
            <person name="Venter J.C."/>
        </authorList>
    </citation>
    <scope>NUCLEOTIDE SEQUENCE [LARGE SCALE GENOMIC DNA]</scope>
    <source>
        <strain>Berkeley</strain>
    </source>
</reference>
<reference key="4">
    <citation type="journal article" date="2002" name="Genome Biol.">
        <title>Annotation of the Drosophila melanogaster euchromatic genome: a systematic review.</title>
        <authorList>
            <person name="Misra S."/>
            <person name="Crosby M.A."/>
            <person name="Mungall C.J."/>
            <person name="Matthews B.B."/>
            <person name="Campbell K.S."/>
            <person name="Hradecky P."/>
            <person name="Huang Y."/>
            <person name="Kaminker J.S."/>
            <person name="Millburn G.H."/>
            <person name="Prochnik S.E."/>
            <person name="Smith C.D."/>
            <person name="Tupy J.L."/>
            <person name="Whitfield E.J."/>
            <person name="Bayraktaroglu L."/>
            <person name="Berman B.P."/>
            <person name="Bettencourt B.R."/>
            <person name="Celniker S.E."/>
            <person name="de Grey A.D.N.J."/>
            <person name="Drysdale R.A."/>
            <person name="Harris N.L."/>
            <person name="Richter J."/>
            <person name="Russo S."/>
            <person name="Schroeder A.J."/>
            <person name="Shu S.Q."/>
            <person name="Stapleton M."/>
            <person name="Yamada C."/>
            <person name="Ashburner M."/>
            <person name="Gelbart W.M."/>
            <person name="Rubin G.M."/>
            <person name="Lewis S.E."/>
        </authorList>
    </citation>
    <scope>GENOME REANNOTATION</scope>
    <source>
        <strain>Berkeley</strain>
    </source>
</reference>
<reference key="5">
    <citation type="journal article" date="2002" name="Genome Biol.">
        <title>A Drosophila full-length cDNA resource.</title>
        <authorList>
            <person name="Stapleton M."/>
            <person name="Carlson J.W."/>
            <person name="Brokstein P."/>
            <person name="Yu C."/>
            <person name="Champe M."/>
            <person name="George R.A."/>
            <person name="Guarin H."/>
            <person name="Kronmiller B."/>
            <person name="Pacleb J.M."/>
            <person name="Park S."/>
            <person name="Wan K.H."/>
            <person name="Rubin G.M."/>
            <person name="Celniker S.E."/>
        </authorList>
    </citation>
    <scope>NUCLEOTIDE SEQUENCE [LARGE SCALE MRNA]</scope>
    <source>
        <strain>Berkeley</strain>
        <tissue>Head</tissue>
    </source>
</reference>
<reference key="6">
    <citation type="journal article" date="1996" name="Mol. Cell. Biol.">
        <title>A Drosophila homolog of the Rac- and Cdc42-activated serine/threonine kinase PAK is a potential focal adhesion and focal complex protein that colocalizes with dynamic actin structures.</title>
        <authorList>
            <person name="Harden N."/>
            <person name="Lee J."/>
            <person name="Loh H.Y."/>
            <person name="Ong Y.M."/>
            <person name="Tan I."/>
            <person name="Leung T."/>
            <person name="Manser E."/>
            <person name="Lim L."/>
        </authorList>
    </citation>
    <scope>INTERACTION WITH PAK</scope>
    <source>
        <strain>Canton-S</strain>
        <tissue>Embryo</tissue>
    </source>
</reference>
<reference key="7">
    <citation type="journal article" date="1997" name="Proc. Natl. Acad. Sci. U.S.A.">
        <title>Genghis Khan (Gek) as a putative effector for Drosophila Cdc42 and regulator of actin polymerization.</title>
        <authorList>
            <person name="Luo L."/>
            <person name="Lee T."/>
            <person name="Tsai L."/>
            <person name="Tang G."/>
            <person name="Jan L.Y."/>
            <person name="Jan Y.N."/>
        </authorList>
    </citation>
    <scope>INTERACTION WITH GEK</scope>
</reference>
<reference key="8">
    <citation type="journal article" date="2003" name="Development">
        <title>Mbt, a Drosophila PAK protein, combines with Cdc42 to regulate photoreceptor cell morphogenesis.</title>
        <authorList>
            <person name="Schneeberger D."/>
            <person name="Raabe T."/>
        </authorList>
    </citation>
    <scope>FUNCTION</scope>
    <scope>INTERACTION WITH MBT</scope>
    <scope>SUBCELLULAR LOCATION</scope>
    <scope>MUTAGENESIS OF GLY-12</scope>
</reference>
<reference key="9">
    <citation type="journal article" date="2016" name="Genetics">
        <title>Unique and Overlapping Functions of Formins Frl and DAAM During Ommatidial Rotation and Neuronal Development in Drosophila.</title>
        <authorList>
            <person name="Dollar G."/>
            <person name="Gombos R."/>
            <person name="Barnett A.A."/>
            <person name="Sanchez Hernandez D."/>
            <person name="Maung S.M."/>
            <person name="Mihaly J."/>
            <person name="Jenny A."/>
        </authorList>
    </citation>
    <scope>FUNCTION</scope>
    <scope>INTERACTION WITH FRL</scope>
</reference>
<gene>
    <name type="primary">Cdc42</name>
    <name type="ORF">CG12530</name>
</gene>
<comment type="function">
    <text evidence="5 6">Regulates mbt kinase activity and is also required to recruit mbt to adherens junctions (PubMed:12490550). Together with mbt and Frl, regulates photoreceptor cell morphogenesis (PubMed:12490550, PubMed:26801180). Together with Frl, has a role in the neuronal development of mushroom bodies (PubMed:26801180).</text>
</comment>
<comment type="catalytic activity">
    <reaction evidence="2 3">
        <text>GTP + H2O = GDP + phosphate + H(+)</text>
        <dbReference type="Rhea" id="RHEA:19669"/>
        <dbReference type="ChEBI" id="CHEBI:15377"/>
        <dbReference type="ChEBI" id="CHEBI:15378"/>
        <dbReference type="ChEBI" id="CHEBI:37565"/>
        <dbReference type="ChEBI" id="CHEBI:43474"/>
        <dbReference type="ChEBI" id="CHEBI:58189"/>
        <dbReference type="EC" id="3.6.5.2"/>
    </reaction>
</comment>
<comment type="subunit">
    <text evidence="5 6 7 8">Interacts with Frl (via GBD/FH3 domain); the interaction is stronger with the GTP bound form of Cdc42 (PubMed:26801180). The GTP-bound but not the GDP-bound form interacts with mbt and gek (PubMed:12490550, PubMed:9371783). When GTP-bound, interacts with Pak (PubMed:8628256).</text>
</comment>
<comment type="interaction">
    <interactant intactId="EBI-114324">
        <id>P40793</id>
    </interactant>
    <interactant intactId="EBI-40206395">
        <id>X2JFU8</id>
        <label>baz</label>
    </interactant>
    <organismsDiffer>false</organismsDiffer>
    <experiments>5</experiments>
</comment>
<comment type="interaction">
    <interactant intactId="EBI-114324">
        <id>P40793</id>
    </interactant>
    <interactant intactId="EBI-75994">
        <id>Q9VXE5</id>
        <label>mbt</label>
    </interactant>
    <organismsDiffer>false</organismsDiffer>
    <experiments>2</experiments>
</comment>
<comment type="interaction">
    <interactant intactId="EBI-114324">
        <id>P40793</id>
    </interactant>
    <interactant intactId="EBI-186645">
        <id>O97111</id>
        <label>par-6</label>
    </interactant>
    <organismsDiffer>false</organismsDiffer>
    <experiments>4</experiments>
</comment>
<comment type="subcellular location">
    <subcellularLocation>
        <location evidence="5">Cell junction</location>
        <location evidence="5">Adherens junction</location>
    </subcellularLocation>
    <subcellularLocation>
        <location evidence="5">Cell membrane</location>
        <topology evidence="5">Lipid-anchor</topology>
    </subcellularLocation>
    <text>Adherens junctions of developing photoreceptor cells.</text>
</comment>
<comment type="similarity">
    <text evidence="9">Belongs to the small GTPase superfamily. Rho family. CDC42 subfamily.</text>
</comment>
<feature type="chain" id="PRO_0000198958" description="Cdc42 homolog">
    <location>
        <begin position="1"/>
        <end position="188"/>
    </location>
</feature>
<feature type="propeptide" id="PRO_0000281288" description="Removed in mature form" evidence="1">
    <location>
        <begin position="189"/>
        <end position="191"/>
    </location>
</feature>
<feature type="short sequence motif" description="Effector region" evidence="4">
    <location>
        <begin position="32"/>
        <end position="40"/>
    </location>
</feature>
<feature type="binding site" evidence="1">
    <location>
        <begin position="10"/>
        <end position="17"/>
    </location>
    <ligand>
        <name>GTP</name>
        <dbReference type="ChEBI" id="CHEBI:37565"/>
    </ligand>
</feature>
<feature type="binding site" evidence="1">
    <location>
        <begin position="57"/>
        <end position="61"/>
    </location>
    <ligand>
        <name>GTP</name>
        <dbReference type="ChEBI" id="CHEBI:37565"/>
    </ligand>
</feature>
<feature type="binding site" evidence="1">
    <location>
        <begin position="115"/>
        <end position="118"/>
    </location>
    <ligand>
        <name>GTP</name>
        <dbReference type="ChEBI" id="CHEBI:37565"/>
    </ligand>
</feature>
<feature type="modified residue" description="Cysteine methyl ester" evidence="1">
    <location>
        <position position="188"/>
    </location>
</feature>
<feature type="lipid moiety-binding region" description="S-geranylgeranyl cysteine" evidence="1">
    <location>
        <position position="188"/>
    </location>
</feature>
<feature type="mutagenesis site" description="Enhances interaction with mbt. Coexpression with mbt slightly reduced the substrate phosphorylation ability of mbt." evidence="5">
    <original>G</original>
    <variation>V</variation>
    <location>
        <position position="12"/>
    </location>
</feature>
<feature type="sequence conflict" description="In Ref. 2; AAD43788." evidence="9" ref="2">
    <original>G</original>
    <variation>D</variation>
    <location>
        <position position="10"/>
    </location>
</feature>
<feature type="sequence conflict" description="In Ref. 2; AAD43792." evidence="9" ref="2">
    <original>D</original>
    <variation>N</variation>
    <location>
        <position position="65"/>
    </location>
</feature>
<feature type="sequence conflict" description="In Ref. 2; AAD43793." evidence="9" ref="2">
    <original>S</original>
    <variation>L</variation>
    <location>
        <position position="83"/>
    </location>
</feature>
<feature type="sequence conflict" description="In Ref. 2; AAD43790." evidence="9" ref="2">
    <original>G</original>
    <variation>D</variation>
    <location>
        <position position="114"/>
    </location>
</feature>
<name>CDC42_DROME</name>
<evidence type="ECO:0000250" key="1"/>
<evidence type="ECO:0000250" key="2">
    <source>
        <dbReference type="UniProtKB" id="P60766"/>
    </source>
</evidence>
<evidence type="ECO:0000250" key="3">
    <source>
        <dbReference type="UniProtKB" id="P60953"/>
    </source>
</evidence>
<evidence type="ECO:0000255" key="4"/>
<evidence type="ECO:0000269" key="5">
    <source>
    </source>
</evidence>
<evidence type="ECO:0000269" key="6">
    <source>
    </source>
</evidence>
<evidence type="ECO:0000269" key="7">
    <source>
    </source>
</evidence>
<evidence type="ECO:0000269" key="8">
    <source>
    </source>
</evidence>
<evidence type="ECO:0000305" key="9"/>